<gene>
    <name type="ordered locus">Os01g0952100</name>
    <name type="ordered locus">LOC_Os01g72300</name>
    <name type="ORF">OsJ_004677</name>
    <name type="ORF">P0431G06.3</name>
</gene>
<comment type="function">
    <text>May play a role in plant defense. Probably has no oxalate oxidase activity even if the active site is conserved.</text>
</comment>
<comment type="subunit">
    <text evidence="1">Oligomer (believed to be a pentamer but probably hexamer).</text>
</comment>
<comment type="subcellular location">
    <subcellularLocation>
        <location evidence="1">Secreted</location>
        <location evidence="1">Extracellular space</location>
        <location evidence="1">Apoplast</location>
    </subcellularLocation>
</comment>
<comment type="similarity">
    <text evidence="4">Belongs to the germin family.</text>
</comment>
<proteinExistence type="evidence at protein level"/>
<reference key="1">
    <citation type="journal article" date="2002" name="Nature">
        <title>The genome sequence and structure of rice chromosome 1.</title>
        <authorList>
            <person name="Sasaki T."/>
            <person name="Matsumoto T."/>
            <person name="Yamamoto K."/>
            <person name="Sakata K."/>
            <person name="Baba T."/>
            <person name="Katayose Y."/>
            <person name="Wu J."/>
            <person name="Niimura Y."/>
            <person name="Cheng Z."/>
            <person name="Nagamura Y."/>
            <person name="Antonio B.A."/>
            <person name="Kanamori H."/>
            <person name="Hosokawa S."/>
            <person name="Masukawa M."/>
            <person name="Arikawa K."/>
            <person name="Chiden Y."/>
            <person name="Hayashi M."/>
            <person name="Okamoto M."/>
            <person name="Ando T."/>
            <person name="Aoki H."/>
            <person name="Arita K."/>
            <person name="Hamada M."/>
            <person name="Harada C."/>
            <person name="Hijishita S."/>
            <person name="Honda M."/>
            <person name="Ichikawa Y."/>
            <person name="Idonuma A."/>
            <person name="Iijima M."/>
            <person name="Ikeda M."/>
            <person name="Ikeno M."/>
            <person name="Ito S."/>
            <person name="Ito T."/>
            <person name="Ito Y."/>
            <person name="Ito Y."/>
            <person name="Iwabuchi A."/>
            <person name="Kamiya K."/>
            <person name="Karasawa W."/>
            <person name="Katagiri S."/>
            <person name="Kikuta A."/>
            <person name="Kobayashi N."/>
            <person name="Kono I."/>
            <person name="Machita K."/>
            <person name="Maehara T."/>
            <person name="Mizuno H."/>
            <person name="Mizubayashi T."/>
            <person name="Mukai Y."/>
            <person name="Nagasaki H."/>
            <person name="Nakashima M."/>
            <person name="Nakama Y."/>
            <person name="Nakamichi Y."/>
            <person name="Nakamura M."/>
            <person name="Namiki N."/>
            <person name="Negishi M."/>
            <person name="Ohta I."/>
            <person name="Ono N."/>
            <person name="Saji S."/>
            <person name="Sakai K."/>
            <person name="Shibata M."/>
            <person name="Shimokawa T."/>
            <person name="Shomura A."/>
            <person name="Song J."/>
            <person name="Takazaki Y."/>
            <person name="Terasawa K."/>
            <person name="Tsuji K."/>
            <person name="Waki K."/>
            <person name="Yamagata H."/>
            <person name="Yamane H."/>
            <person name="Yoshiki S."/>
            <person name="Yoshihara R."/>
            <person name="Yukawa K."/>
            <person name="Zhong H."/>
            <person name="Iwama H."/>
            <person name="Endo T."/>
            <person name="Ito H."/>
            <person name="Hahn J.H."/>
            <person name="Kim H.-I."/>
            <person name="Eun M.-Y."/>
            <person name="Yano M."/>
            <person name="Jiang J."/>
            <person name="Gojobori T."/>
        </authorList>
    </citation>
    <scope>NUCLEOTIDE SEQUENCE [LARGE SCALE GENOMIC DNA]</scope>
    <source>
        <strain>cv. Nipponbare</strain>
    </source>
</reference>
<reference key="2">
    <citation type="journal article" date="2005" name="Nature">
        <title>The map-based sequence of the rice genome.</title>
        <authorList>
            <consortium name="International rice genome sequencing project (IRGSP)"/>
        </authorList>
    </citation>
    <scope>NUCLEOTIDE SEQUENCE [LARGE SCALE GENOMIC DNA]</scope>
    <source>
        <strain>cv. Nipponbare</strain>
    </source>
</reference>
<reference key="3">
    <citation type="journal article" date="2008" name="Nucleic Acids Res.">
        <title>The rice annotation project database (RAP-DB): 2008 update.</title>
        <authorList>
            <consortium name="The rice annotation project (RAP)"/>
        </authorList>
    </citation>
    <scope>GENOME REANNOTATION</scope>
    <source>
        <strain>cv. Nipponbare</strain>
    </source>
</reference>
<reference key="4">
    <citation type="journal article" date="2013" name="Rice">
        <title>Improvement of the Oryza sativa Nipponbare reference genome using next generation sequence and optical map data.</title>
        <authorList>
            <person name="Kawahara Y."/>
            <person name="de la Bastide M."/>
            <person name="Hamilton J.P."/>
            <person name="Kanamori H."/>
            <person name="McCombie W.R."/>
            <person name="Ouyang S."/>
            <person name="Schwartz D.C."/>
            <person name="Tanaka T."/>
            <person name="Wu J."/>
            <person name="Zhou S."/>
            <person name="Childs K.L."/>
            <person name="Davidson R.M."/>
            <person name="Lin H."/>
            <person name="Quesada-Ocampo L."/>
            <person name="Vaillancourt B."/>
            <person name="Sakai H."/>
            <person name="Lee S.S."/>
            <person name="Kim J."/>
            <person name="Numa H."/>
            <person name="Itoh T."/>
            <person name="Buell C.R."/>
            <person name="Matsumoto T."/>
        </authorList>
    </citation>
    <scope>GENOME REANNOTATION</scope>
    <source>
        <strain>cv. Nipponbare</strain>
    </source>
</reference>
<reference key="5">
    <citation type="journal article" date="2005" name="PLoS Biol.">
        <title>The genomes of Oryza sativa: a history of duplications.</title>
        <authorList>
            <person name="Yu J."/>
            <person name="Wang J."/>
            <person name="Lin W."/>
            <person name="Li S."/>
            <person name="Li H."/>
            <person name="Zhou J."/>
            <person name="Ni P."/>
            <person name="Dong W."/>
            <person name="Hu S."/>
            <person name="Zeng C."/>
            <person name="Zhang J."/>
            <person name="Zhang Y."/>
            <person name="Li R."/>
            <person name="Xu Z."/>
            <person name="Li S."/>
            <person name="Li X."/>
            <person name="Zheng H."/>
            <person name="Cong L."/>
            <person name="Lin L."/>
            <person name="Yin J."/>
            <person name="Geng J."/>
            <person name="Li G."/>
            <person name="Shi J."/>
            <person name="Liu J."/>
            <person name="Lv H."/>
            <person name="Li J."/>
            <person name="Wang J."/>
            <person name="Deng Y."/>
            <person name="Ran L."/>
            <person name="Shi X."/>
            <person name="Wang X."/>
            <person name="Wu Q."/>
            <person name="Li C."/>
            <person name="Ren X."/>
            <person name="Wang J."/>
            <person name="Wang X."/>
            <person name="Li D."/>
            <person name="Liu D."/>
            <person name="Zhang X."/>
            <person name="Ji Z."/>
            <person name="Zhao W."/>
            <person name="Sun Y."/>
            <person name="Zhang Z."/>
            <person name="Bao J."/>
            <person name="Han Y."/>
            <person name="Dong L."/>
            <person name="Ji J."/>
            <person name="Chen P."/>
            <person name="Wu S."/>
            <person name="Liu J."/>
            <person name="Xiao Y."/>
            <person name="Bu D."/>
            <person name="Tan J."/>
            <person name="Yang L."/>
            <person name="Ye C."/>
            <person name="Zhang J."/>
            <person name="Xu J."/>
            <person name="Zhou Y."/>
            <person name="Yu Y."/>
            <person name="Zhang B."/>
            <person name="Zhuang S."/>
            <person name="Wei H."/>
            <person name="Liu B."/>
            <person name="Lei M."/>
            <person name="Yu H."/>
            <person name="Li Y."/>
            <person name="Xu H."/>
            <person name="Wei S."/>
            <person name="He X."/>
            <person name="Fang L."/>
            <person name="Zhang Z."/>
            <person name="Zhang Y."/>
            <person name="Huang X."/>
            <person name="Su Z."/>
            <person name="Tong W."/>
            <person name="Li J."/>
            <person name="Tong Z."/>
            <person name="Li S."/>
            <person name="Ye J."/>
            <person name="Wang L."/>
            <person name="Fang L."/>
            <person name="Lei T."/>
            <person name="Chen C.-S."/>
            <person name="Chen H.-C."/>
            <person name="Xu Z."/>
            <person name="Li H."/>
            <person name="Huang H."/>
            <person name="Zhang F."/>
            <person name="Xu H."/>
            <person name="Li N."/>
            <person name="Zhao C."/>
            <person name="Li S."/>
            <person name="Dong L."/>
            <person name="Huang Y."/>
            <person name="Li L."/>
            <person name="Xi Y."/>
            <person name="Qi Q."/>
            <person name="Li W."/>
            <person name="Zhang B."/>
            <person name="Hu W."/>
            <person name="Zhang Y."/>
            <person name="Tian X."/>
            <person name="Jiao Y."/>
            <person name="Liang X."/>
            <person name="Jin J."/>
            <person name="Gao L."/>
            <person name="Zheng W."/>
            <person name="Hao B."/>
            <person name="Liu S.-M."/>
            <person name="Wang W."/>
            <person name="Yuan L."/>
            <person name="Cao M."/>
            <person name="McDermott J."/>
            <person name="Samudrala R."/>
            <person name="Wang J."/>
            <person name="Wong G.K.-S."/>
            <person name="Yang H."/>
        </authorList>
    </citation>
    <scope>NUCLEOTIDE SEQUENCE [LARGE SCALE GENOMIC DNA]</scope>
    <source>
        <strain>cv. Nipponbare</strain>
    </source>
</reference>
<reference key="6">
    <citation type="journal article" date="2006" name="Proteomics">
        <title>Proteomic analysis of rice leaf, stem and root tissues during growth course.</title>
        <authorList>
            <person name="Nozu Y."/>
            <person name="Tsugita A."/>
            <person name="Kamijo K."/>
        </authorList>
    </citation>
    <scope>PROTEIN SEQUENCE [LARGE SCALE ANALYSIS] OF 28-34</scope>
    <scope>IDENTIFICATION BY MASS SPECTROMETRY</scope>
    <source>
        <strain>cv. Nipponbare</strain>
    </source>
</reference>
<sequence length="235" mass="24394">MAAKLPTVVLLASFAAVILSLAAPLLAGDPDMLQDICVADYKSLQGPLRVNGFPCKPEANVTAEDFFFPGLGKPADVYSGNPMGSAVTAATVERIPGLNTLGVSMARVDYAPWGGANPPHSHPRATEILFVADGLLEVGFVVATAAPASSRLITRVVPKGGVFVFPRGLLHYERSVGEKPAVAISAFDSQLPGTQAAADALFGSSSPAVPTDVLARAFQVDGGVVENIKSKFQHK</sequence>
<protein>
    <recommendedName>
        <fullName>Germin-like protein 1-4</fullName>
    </recommendedName>
</protein>
<dbReference type="EMBL" id="AP003683">
    <property type="protein sequence ID" value="BAB64691.1"/>
    <property type="molecule type" value="Genomic_DNA"/>
</dbReference>
<dbReference type="EMBL" id="AP008207">
    <property type="protein sequence ID" value="BAF07331.1"/>
    <property type="molecule type" value="Genomic_DNA"/>
</dbReference>
<dbReference type="EMBL" id="AP014957">
    <property type="protein sequence ID" value="BAS76250.1"/>
    <property type="molecule type" value="Genomic_DNA"/>
</dbReference>
<dbReference type="EMBL" id="CM000138">
    <property type="protein sequence ID" value="EAZ14852.1"/>
    <property type="molecule type" value="Genomic_DNA"/>
</dbReference>
<dbReference type="RefSeq" id="XP_015644512.1">
    <property type="nucleotide sequence ID" value="XM_015789026.1"/>
</dbReference>
<dbReference type="SMR" id="Q942A7"/>
<dbReference type="FunCoup" id="Q942A7">
    <property type="interactions" value="39"/>
</dbReference>
<dbReference type="STRING" id="39947.Q942A7"/>
<dbReference type="PaxDb" id="39947-Q942A7"/>
<dbReference type="EnsemblPlants" id="Os01t0952100-00">
    <property type="protein sequence ID" value="Os01t0952100-00"/>
    <property type="gene ID" value="Os01g0952100"/>
</dbReference>
<dbReference type="Gramene" id="Os01t0952100-00">
    <property type="protein sequence ID" value="Os01t0952100-00"/>
    <property type="gene ID" value="Os01g0952100"/>
</dbReference>
<dbReference type="KEGG" id="dosa:Os01g0952100"/>
<dbReference type="eggNOG" id="ENOG502QV0Z">
    <property type="taxonomic scope" value="Eukaryota"/>
</dbReference>
<dbReference type="HOGENOM" id="CLU_015790_0_3_1"/>
<dbReference type="InParanoid" id="Q942A7"/>
<dbReference type="OMA" id="APWGGVN"/>
<dbReference type="OrthoDB" id="1921208at2759"/>
<dbReference type="Proteomes" id="UP000000763">
    <property type="component" value="Chromosome 1"/>
</dbReference>
<dbReference type="Proteomes" id="UP000007752">
    <property type="component" value="Chromosome 1"/>
</dbReference>
<dbReference type="Proteomes" id="UP000059680">
    <property type="component" value="Chromosome 1"/>
</dbReference>
<dbReference type="GO" id="GO:0048046">
    <property type="term" value="C:apoplast"/>
    <property type="evidence" value="ECO:0007669"/>
    <property type="project" value="UniProtKB-SubCell"/>
</dbReference>
<dbReference type="GO" id="GO:0009506">
    <property type="term" value="C:plasmodesma"/>
    <property type="evidence" value="ECO:0000318"/>
    <property type="project" value="GO_Central"/>
</dbReference>
<dbReference type="GO" id="GO:0030145">
    <property type="term" value="F:manganese ion binding"/>
    <property type="evidence" value="ECO:0007669"/>
    <property type="project" value="InterPro"/>
</dbReference>
<dbReference type="GO" id="GO:0010497">
    <property type="term" value="P:plasmodesmata-mediated intercellular transport"/>
    <property type="evidence" value="ECO:0000318"/>
    <property type="project" value="GO_Central"/>
</dbReference>
<dbReference type="GO" id="GO:2000280">
    <property type="term" value="P:regulation of root development"/>
    <property type="evidence" value="ECO:0000318"/>
    <property type="project" value="GO_Central"/>
</dbReference>
<dbReference type="CDD" id="cd02241">
    <property type="entry name" value="cupin_OxOx"/>
    <property type="match status" value="1"/>
</dbReference>
<dbReference type="FunFam" id="2.60.120.10:FF:000025">
    <property type="entry name" value="germin-like protein subfamily 2 member 1"/>
    <property type="match status" value="1"/>
</dbReference>
<dbReference type="Gene3D" id="2.60.120.10">
    <property type="entry name" value="Jelly Rolls"/>
    <property type="match status" value="1"/>
</dbReference>
<dbReference type="InterPro" id="IPR006045">
    <property type="entry name" value="Cupin_1"/>
</dbReference>
<dbReference type="InterPro" id="IPR001929">
    <property type="entry name" value="Germin"/>
</dbReference>
<dbReference type="InterPro" id="IPR019780">
    <property type="entry name" value="Germin_Mn-BS"/>
</dbReference>
<dbReference type="InterPro" id="IPR014710">
    <property type="entry name" value="RmlC-like_jellyroll"/>
</dbReference>
<dbReference type="InterPro" id="IPR011051">
    <property type="entry name" value="RmlC_Cupin_sf"/>
</dbReference>
<dbReference type="PANTHER" id="PTHR31238">
    <property type="entry name" value="GERMIN-LIKE PROTEIN SUBFAMILY 3 MEMBER 3"/>
    <property type="match status" value="1"/>
</dbReference>
<dbReference type="Pfam" id="PF00190">
    <property type="entry name" value="Cupin_1"/>
    <property type="match status" value="1"/>
</dbReference>
<dbReference type="PRINTS" id="PR00325">
    <property type="entry name" value="GERMIN"/>
</dbReference>
<dbReference type="SMART" id="SM00835">
    <property type="entry name" value="Cupin_1"/>
    <property type="match status" value="1"/>
</dbReference>
<dbReference type="SUPFAM" id="SSF51182">
    <property type="entry name" value="RmlC-like cupins"/>
    <property type="match status" value="1"/>
</dbReference>
<dbReference type="PROSITE" id="PS00725">
    <property type="entry name" value="GERMIN"/>
    <property type="match status" value="1"/>
</dbReference>
<name>GL14_ORYSJ</name>
<accession>Q942A7</accession>
<accession>A0A0P0VCZ1</accession>
<evidence type="ECO:0000250" key="1"/>
<evidence type="ECO:0000255" key="2"/>
<evidence type="ECO:0000269" key="3">
    <source>
    </source>
</evidence>
<evidence type="ECO:0000305" key="4"/>
<feature type="signal peptide" evidence="3">
    <location>
        <begin position="1"/>
        <end position="27"/>
    </location>
</feature>
<feature type="chain" id="PRO_0000365497" description="Germin-like protein 1-4">
    <location>
        <begin position="28"/>
        <end position="235"/>
    </location>
</feature>
<feature type="domain" description="Cupin type-1" evidence="2">
    <location>
        <begin position="69"/>
        <end position="226"/>
    </location>
</feature>
<feature type="binding site" evidence="1">
    <location>
        <position position="120"/>
    </location>
    <ligand>
        <name>Mn(2+)</name>
        <dbReference type="ChEBI" id="CHEBI:29035"/>
    </ligand>
</feature>
<feature type="binding site" evidence="1">
    <location>
        <position position="122"/>
    </location>
    <ligand>
        <name>Mn(2+)</name>
        <dbReference type="ChEBI" id="CHEBI:29035"/>
    </ligand>
</feature>
<feature type="binding site" evidence="1">
    <location>
        <position position="127"/>
    </location>
    <ligand>
        <name>Mn(2+)</name>
        <dbReference type="ChEBI" id="CHEBI:29035"/>
    </ligand>
</feature>
<feature type="binding site" evidence="1">
    <location>
        <position position="171"/>
    </location>
    <ligand>
        <name>Mn(2+)</name>
        <dbReference type="ChEBI" id="CHEBI:29035"/>
    </ligand>
</feature>
<feature type="glycosylation site" description="N-linked (GlcNAc...) asparagine" evidence="2">
    <location>
        <position position="60"/>
    </location>
</feature>
<feature type="disulfide bond" evidence="1">
    <location>
        <begin position="37"/>
        <end position="55"/>
    </location>
</feature>
<keyword id="KW-0052">Apoplast</keyword>
<keyword id="KW-0903">Direct protein sequencing</keyword>
<keyword id="KW-1015">Disulfide bond</keyword>
<keyword id="KW-0325">Glycoprotein</keyword>
<keyword id="KW-0464">Manganese</keyword>
<keyword id="KW-0479">Metal-binding</keyword>
<keyword id="KW-1185">Reference proteome</keyword>
<keyword id="KW-0964">Secreted</keyword>
<keyword id="KW-0732">Signal</keyword>
<organism>
    <name type="scientific">Oryza sativa subsp. japonica</name>
    <name type="common">Rice</name>
    <dbReference type="NCBI Taxonomy" id="39947"/>
    <lineage>
        <taxon>Eukaryota</taxon>
        <taxon>Viridiplantae</taxon>
        <taxon>Streptophyta</taxon>
        <taxon>Embryophyta</taxon>
        <taxon>Tracheophyta</taxon>
        <taxon>Spermatophyta</taxon>
        <taxon>Magnoliopsida</taxon>
        <taxon>Liliopsida</taxon>
        <taxon>Poales</taxon>
        <taxon>Poaceae</taxon>
        <taxon>BOP clade</taxon>
        <taxon>Oryzoideae</taxon>
        <taxon>Oryzeae</taxon>
        <taxon>Oryzinae</taxon>
        <taxon>Oryza</taxon>
        <taxon>Oryza sativa</taxon>
    </lineage>
</organism>